<sequence length="546" mass="58938">MGNSQEPQDFNISVMPSSLTPVHVAKAAEGLNLYDTASHQVSHFVPLKPGEVGIYVCGATVQSSPHIGHIRAAVAFDIVRRWFLKLGYKVTFVRNVTDIDDKILVKAAAAGQRWWARAYYYEREFTEAYNTLGVLPPTVEPRATGHMSDMIDLIQRILDNGHGYVVTDADGKPTGNVYFDVASWPHYGELTHQKQTSEVDEAAAVADRMGPSVDATGADKYNPVDPADASPDKHDPRDFALWKAPKDTDPEDARWSTPFGVGRPGWHIECSAMSHRYLGDGFDIHGGGLDLRFPHHENEMAQTCAAGYPSAARWMHSAWVTAKGEKMSKSLGTGLSVPSVLAEHSAWVVRYALGSVQYRSMLEWSDQALVEAQAAYDRVSNFIERAGVALGGQPSREEVAAVSADDLPADFVAAMNDDVNVSGATAAIFTAIRSGNTLLSQLADRADSETAKAEVREALLAVRAMLDTLGLDPLAEPWVSAGGAADGTAESPEHAALEALIAEQLNARAEARKAKDFAKADQIRDALTEAGIAIEDGPQGSTWSLK</sequence>
<reference key="1">
    <citation type="journal article" date="2002" name="Proc. Natl. Acad. Sci. U.S.A.">
        <title>The genome sequence of Bifidobacterium longum reflects its adaptation to the human gastrointestinal tract.</title>
        <authorList>
            <person name="Schell M.A."/>
            <person name="Karmirantzou M."/>
            <person name="Snel B."/>
            <person name="Vilanova D."/>
            <person name="Berger B."/>
            <person name="Pessi G."/>
            <person name="Zwahlen M.-C."/>
            <person name="Desiere F."/>
            <person name="Bork P."/>
            <person name="Delley M."/>
            <person name="Pridmore R.D."/>
            <person name="Arigoni F."/>
        </authorList>
    </citation>
    <scope>NUCLEOTIDE SEQUENCE [LARGE SCALE GENOMIC DNA]</scope>
    <source>
        <strain>NCC 2705</strain>
    </source>
</reference>
<organism>
    <name type="scientific">Bifidobacterium longum (strain NCC 2705)</name>
    <dbReference type="NCBI Taxonomy" id="206672"/>
    <lineage>
        <taxon>Bacteria</taxon>
        <taxon>Bacillati</taxon>
        <taxon>Actinomycetota</taxon>
        <taxon>Actinomycetes</taxon>
        <taxon>Bifidobacteriales</taxon>
        <taxon>Bifidobacteriaceae</taxon>
        <taxon>Bifidobacterium</taxon>
    </lineage>
</organism>
<keyword id="KW-0030">Aminoacyl-tRNA synthetase</keyword>
<keyword id="KW-0067">ATP-binding</keyword>
<keyword id="KW-0963">Cytoplasm</keyword>
<keyword id="KW-0436">Ligase</keyword>
<keyword id="KW-0479">Metal-binding</keyword>
<keyword id="KW-0547">Nucleotide-binding</keyword>
<keyword id="KW-0648">Protein biosynthesis</keyword>
<keyword id="KW-1185">Reference proteome</keyword>
<keyword id="KW-0862">Zinc</keyword>
<dbReference type="EC" id="6.1.1.16" evidence="1"/>
<dbReference type="EMBL" id="AE014295">
    <property type="protein sequence ID" value="AAN24141.1"/>
    <property type="molecule type" value="Genomic_DNA"/>
</dbReference>
<dbReference type="RefSeq" id="NP_695505.1">
    <property type="nucleotide sequence ID" value="NC_004307.2"/>
</dbReference>
<dbReference type="RefSeq" id="WP_011068414.1">
    <property type="nucleotide sequence ID" value="NC_004307.2"/>
</dbReference>
<dbReference type="SMR" id="Q8G7G5"/>
<dbReference type="STRING" id="206672.BL0301"/>
<dbReference type="EnsemblBacteria" id="AAN24141">
    <property type="protein sequence ID" value="AAN24141"/>
    <property type="gene ID" value="BL0301"/>
</dbReference>
<dbReference type="KEGG" id="blo:BL0301"/>
<dbReference type="PATRIC" id="fig|206672.9.peg.1039"/>
<dbReference type="HOGENOM" id="CLU_013528_0_1_11"/>
<dbReference type="OrthoDB" id="9815130at2"/>
<dbReference type="PhylomeDB" id="Q8G7G5"/>
<dbReference type="Proteomes" id="UP000000439">
    <property type="component" value="Chromosome"/>
</dbReference>
<dbReference type="GO" id="GO:0005829">
    <property type="term" value="C:cytosol"/>
    <property type="evidence" value="ECO:0007669"/>
    <property type="project" value="TreeGrafter"/>
</dbReference>
<dbReference type="GO" id="GO:0005524">
    <property type="term" value="F:ATP binding"/>
    <property type="evidence" value="ECO:0007669"/>
    <property type="project" value="UniProtKB-UniRule"/>
</dbReference>
<dbReference type="GO" id="GO:0004817">
    <property type="term" value="F:cysteine-tRNA ligase activity"/>
    <property type="evidence" value="ECO:0007669"/>
    <property type="project" value="UniProtKB-UniRule"/>
</dbReference>
<dbReference type="GO" id="GO:0008270">
    <property type="term" value="F:zinc ion binding"/>
    <property type="evidence" value="ECO:0007669"/>
    <property type="project" value="UniProtKB-UniRule"/>
</dbReference>
<dbReference type="GO" id="GO:0006423">
    <property type="term" value="P:cysteinyl-tRNA aminoacylation"/>
    <property type="evidence" value="ECO:0007669"/>
    <property type="project" value="UniProtKB-UniRule"/>
</dbReference>
<dbReference type="CDD" id="cd00672">
    <property type="entry name" value="CysRS_core"/>
    <property type="match status" value="1"/>
</dbReference>
<dbReference type="Gene3D" id="1.20.120.1910">
    <property type="entry name" value="Cysteine-tRNA ligase, C-terminal anti-codon recognition domain"/>
    <property type="match status" value="1"/>
</dbReference>
<dbReference type="Gene3D" id="3.40.50.620">
    <property type="entry name" value="HUPs"/>
    <property type="match status" value="1"/>
</dbReference>
<dbReference type="HAMAP" id="MF_00041">
    <property type="entry name" value="Cys_tRNA_synth"/>
    <property type="match status" value="1"/>
</dbReference>
<dbReference type="InterPro" id="IPR015803">
    <property type="entry name" value="Cys-tRNA-ligase"/>
</dbReference>
<dbReference type="InterPro" id="IPR015273">
    <property type="entry name" value="Cys-tRNA-synt_Ia_DALR"/>
</dbReference>
<dbReference type="InterPro" id="IPR024909">
    <property type="entry name" value="Cys-tRNA/MSH_ligase"/>
</dbReference>
<dbReference type="InterPro" id="IPR056411">
    <property type="entry name" value="CysS_C"/>
</dbReference>
<dbReference type="InterPro" id="IPR014729">
    <property type="entry name" value="Rossmann-like_a/b/a_fold"/>
</dbReference>
<dbReference type="InterPro" id="IPR032678">
    <property type="entry name" value="tRNA-synt_1_cat_dom"/>
</dbReference>
<dbReference type="InterPro" id="IPR009080">
    <property type="entry name" value="tRNAsynth_Ia_anticodon-bd"/>
</dbReference>
<dbReference type="NCBIfam" id="TIGR00435">
    <property type="entry name" value="cysS"/>
    <property type="match status" value="1"/>
</dbReference>
<dbReference type="PANTHER" id="PTHR10890:SF30">
    <property type="entry name" value="CYSTEINE--TRNA LIGASE"/>
    <property type="match status" value="1"/>
</dbReference>
<dbReference type="PANTHER" id="PTHR10890">
    <property type="entry name" value="CYSTEINYL-TRNA SYNTHETASE"/>
    <property type="match status" value="1"/>
</dbReference>
<dbReference type="Pfam" id="PF23493">
    <property type="entry name" value="CysS_C"/>
    <property type="match status" value="1"/>
</dbReference>
<dbReference type="Pfam" id="PF09190">
    <property type="entry name" value="DALR_2"/>
    <property type="match status" value="1"/>
</dbReference>
<dbReference type="Pfam" id="PF01406">
    <property type="entry name" value="tRNA-synt_1e"/>
    <property type="match status" value="1"/>
</dbReference>
<dbReference type="PRINTS" id="PR00983">
    <property type="entry name" value="TRNASYNTHCYS"/>
</dbReference>
<dbReference type="SMART" id="SM00840">
    <property type="entry name" value="DALR_2"/>
    <property type="match status" value="1"/>
</dbReference>
<dbReference type="SUPFAM" id="SSF47323">
    <property type="entry name" value="Anticodon-binding domain of a subclass of class I aminoacyl-tRNA synthetases"/>
    <property type="match status" value="1"/>
</dbReference>
<dbReference type="SUPFAM" id="SSF52374">
    <property type="entry name" value="Nucleotidylyl transferase"/>
    <property type="match status" value="1"/>
</dbReference>
<name>SYC_BIFLO</name>
<protein>
    <recommendedName>
        <fullName evidence="1">Cysteine--tRNA ligase</fullName>
        <ecNumber evidence="1">6.1.1.16</ecNumber>
    </recommendedName>
    <alternativeName>
        <fullName evidence="1">Cysteinyl-tRNA synthetase</fullName>
        <shortName evidence="1">CysRS</shortName>
    </alternativeName>
</protein>
<proteinExistence type="inferred from homology"/>
<evidence type="ECO:0000255" key="1">
    <source>
        <dbReference type="HAMAP-Rule" id="MF_00041"/>
    </source>
</evidence>
<evidence type="ECO:0000256" key="2">
    <source>
        <dbReference type="SAM" id="MobiDB-lite"/>
    </source>
</evidence>
<accession>Q8G7G5</accession>
<gene>
    <name evidence="1" type="primary">cysS</name>
    <name type="ordered locus">BL0301</name>
</gene>
<comment type="catalytic activity">
    <reaction evidence="1">
        <text>tRNA(Cys) + L-cysteine + ATP = L-cysteinyl-tRNA(Cys) + AMP + diphosphate</text>
        <dbReference type="Rhea" id="RHEA:17773"/>
        <dbReference type="Rhea" id="RHEA-COMP:9661"/>
        <dbReference type="Rhea" id="RHEA-COMP:9679"/>
        <dbReference type="ChEBI" id="CHEBI:30616"/>
        <dbReference type="ChEBI" id="CHEBI:33019"/>
        <dbReference type="ChEBI" id="CHEBI:35235"/>
        <dbReference type="ChEBI" id="CHEBI:78442"/>
        <dbReference type="ChEBI" id="CHEBI:78517"/>
        <dbReference type="ChEBI" id="CHEBI:456215"/>
        <dbReference type="EC" id="6.1.1.16"/>
    </reaction>
</comment>
<comment type="cofactor">
    <cofactor evidence="1">
        <name>Zn(2+)</name>
        <dbReference type="ChEBI" id="CHEBI:29105"/>
    </cofactor>
    <text evidence="1">Binds 1 zinc ion per subunit.</text>
</comment>
<comment type="subunit">
    <text evidence="1">Monomer.</text>
</comment>
<comment type="subcellular location">
    <subcellularLocation>
        <location evidence="1">Cytoplasm</location>
    </subcellularLocation>
</comment>
<comment type="similarity">
    <text evidence="1">Belongs to the class-I aminoacyl-tRNA synthetase family.</text>
</comment>
<feature type="chain" id="PRO_0000159357" description="Cysteine--tRNA ligase">
    <location>
        <begin position="1"/>
        <end position="546"/>
    </location>
</feature>
<feature type="region of interest" description="Disordered" evidence="2">
    <location>
        <begin position="211"/>
        <end position="236"/>
    </location>
</feature>
<feature type="short sequence motif" description="'HIGH' region">
    <location>
        <begin position="59"/>
        <end position="69"/>
    </location>
</feature>
<feature type="short sequence motif" description="'KMSKS' region">
    <location>
        <begin position="326"/>
        <end position="330"/>
    </location>
</feature>
<feature type="binding site" evidence="1">
    <location>
        <position position="57"/>
    </location>
    <ligand>
        <name>Zn(2+)</name>
        <dbReference type="ChEBI" id="CHEBI:29105"/>
    </ligand>
</feature>
<feature type="binding site" evidence="1">
    <location>
        <position position="270"/>
    </location>
    <ligand>
        <name>Zn(2+)</name>
        <dbReference type="ChEBI" id="CHEBI:29105"/>
    </ligand>
</feature>
<feature type="binding site" evidence="1">
    <location>
        <position position="295"/>
    </location>
    <ligand>
        <name>Zn(2+)</name>
        <dbReference type="ChEBI" id="CHEBI:29105"/>
    </ligand>
</feature>
<feature type="binding site" evidence="1">
    <location>
        <position position="299"/>
    </location>
    <ligand>
        <name>Zn(2+)</name>
        <dbReference type="ChEBI" id="CHEBI:29105"/>
    </ligand>
</feature>
<feature type="binding site" evidence="1">
    <location>
        <position position="329"/>
    </location>
    <ligand>
        <name>ATP</name>
        <dbReference type="ChEBI" id="CHEBI:30616"/>
    </ligand>
</feature>